<name>EFP_KOSOT</name>
<sequence>MVEVGDIRKGMALIIDNDIYIVLDVNKHFTARGSGIIRTKMKNIRTGYVREFKFNSGEKVEEASLSLRHVQYLYRDGDLFYFMDLETYEQYALDKDIIGEAVYYLKENMELDLQFHDSTPIGVVLPNTVILEVVETAPSYKGDTVSGGGKPAVCETGLKVIVPFFVETGQKIKVDTRTGEYIERA</sequence>
<proteinExistence type="inferred from homology"/>
<organism>
    <name type="scientific">Kosmotoga olearia (strain ATCC BAA-1733 / DSM 21960 / TBF 19.5.1)</name>
    <dbReference type="NCBI Taxonomy" id="521045"/>
    <lineage>
        <taxon>Bacteria</taxon>
        <taxon>Thermotogati</taxon>
        <taxon>Thermotogota</taxon>
        <taxon>Thermotogae</taxon>
        <taxon>Kosmotogales</taxon>
        <taxon>Kosmotogaceae</taxon>
        <taxon>Kosmotoga</taxon>
    </lineage>
</organism>
<evidence type="ECO:0000255" key="1">
    <source>
        <dbReference type="HAMAP-Rule" id="MF_00141"/>
    </source>
</evidence>
<gene>
    <name evidence="1" type="primary">efp</name>
    <name type="ordered locus">Kole_2117</name>
</gene>
<protein>
    <recommendedName>
        <fullName evidence="1">Elongation factor P</fullName>
        <shortName evidence="1">EF-P</shortName>
    </recommendedName>
</protein>
<reference key="1">
    <citation type="submission" date="2009-06" db="EMBL/GenBank/DDBJ databases">
        <title>Complete sequence of Thermotogales bacterium TBF 19.5.1.</title>
        <authorList>
            <consortium name="US DOE Joint Genome Institute"/>
            <person name="Lucas S."/>
            <person name="Copeland A."/>
            <person name="Lapidus A."/>
            <person name="Glavina del Rio T."/>
            <person name="Tice H."/>
            <person name="Bruce D."/>
            <person name="Goodwin L."/>
            <person name="Pitluck S."/>
            <person name="Chertkov O."/>
            <person name="Brettin T."/>
            <person name="Detter J.C."/>
            <person name="Han C."/>
            <person name="Schmutz J."/>
            <person name="Larimer F."/>
            <person name="Land M."/>
            <person name="Hauser L."/>
            <person name="Kyrpides N."/>
            <person name="Ovchinnikova G."/>
            <person name="Noll K."/>
        </authorList>
    </citation>
    <scope>NUCLEOTIDE SEQUENCE [LARGE SCALE GENOMIC DNA]</scope>
    <source>
        <strain>ATCC BAA-1733 / DSM 21960 / TBF 19.5.1</strain>
    </source>
</reference>
<comment type="function">
    <text evidence="1">Involved in peptide bond synthesis. Stimulates efficient translation and peptide-bond synthesis on native or reconstituted 70S ribosomes in vitro. Probably functions indirectly by altering the affinity of the ribosome for aminoacyl-tRNA, thus increasing their reactivity as acceptors for peptidyl transferase.</text>
</comment>
<comment type="pathway">
    <text evidence="1">Protein biosynthesis; polypeptide chain elongation.</text>
</comment>
<comment type="subcellular location">
    <subcellularLocation>
        <location evidence="1">Cytoplasm</location>
    </subcellularLocation>
</comment>
<comment type="similarity">
    <text evidence="1">Belongs to the elongation factor P family.</text>
</comment>
<feature type="chain" id="PRO_1000203273" description="Elongation factor P">
    <location>
        <begin position="1"/>
        <end position="185"/>
    </location>
</feature>
<accession>C5CI92</accession>
<keyword id="KW-0963">Cytoplasm</keyword>
<keyword id="KW-0251">Elongation factor</keyword>
<keyword id="KW-0648">Protein biosynthesis</keyword>
<keyword id="KW-1185">Reference proteome</keyword>
<dbReference type="EMBL" id="CP001634">
    <property type="protein sequence ID" value="ACR80794.1"/>
    <property type="molecule type" value="Genomic_DNA"/>
</dbReference>
<dbReference type="RefSeq" id="WP_015869435.1">
    <property type="nucleotide sequence ID" value="NC_012785.1"/>
</dbReference>
<dbReference type="SMR" id="C5CI92"/>
<dbReference type="STRING" id="521045.Kole_2117"/>
<dbReference type="KEGG" id="kol:Kole_2117"/>
<dbReference type="eggNOG" id="COG0231">
    <property type="taxonomic scope" value="Bacteria"/>
</dbReference>
<dbReference type="HOGENOM" id="CLU_074944_0_1_0"/>
<dbReference type="OrthoDB" id="9801844at2"/>
<dbReference type="UniPathway" id="UPA00345"/>
<dbReference type="Proteomes" id="UP000002382">
    <property type="component" value="Chromosome"/>
</dbReference>
<dbReference type="GO" id="GO:0005737">
    <property type="term" value="C:cytoplasm"/>
    <property type="evidence" value="ECO:0007669"/>
    <property type="project" value="UniProtKB-SubCell"/>
</dbReference>
<dbReference type="GO" id="GO:0003746">
    <property type="term" value="F:translation elongation factor activity"/>
    <property type="evidence" value="ECO:0007669"/>
    <property type="project" value="UniProtKB-UniRule"/>
</dbReference>
<dbReference type="GO" id="GO:0043043">
    <property type="term" value="P:peptide biosynthetic process"/>
    <property type="evidence" value="ECO:0007669"/>
    <property type="project" value="InterPro"/>
</dbReference>
<dbReference type="CDD" id="cd04470">
    <property type="entry name" value="S1_EF-P_repeat_1"/>
    <property type="match status" value="1"/>
</dbReference>
<dbReference type="CDD" id="cd05794">
    <property type="entry name" value="S1_EF-P_repeat_2"/>
    <property type="match status" value="1"/>
</dbReference>
<dbReference type="FunFam" id="2.40.50.140:FF:000004">
    <property type="entry name" value="Elongation factor P"/>
    <property type="match status" value="1"/>
</dbReference>
<dbReference type="FunFam" id="2.40.50.140:FF:000009">
    <property type="entry name" value="Elongation factor P"/>
    <property type="match status" value="1"/>
</dbReference>
<dbReference type="Gene3D" id="2.30.30.30">
    <property type="match status" value="1"/>
</dbReference>
<dbReference type="Gene3D" id="2.40.50.140">
    <property type="entry name" value="Nucleic acid-binding proteins"/>
    <property type="match status" value="2"/>
</dbReference>
<dbReference type="HAMAP" id="MF_00141">
    <property type="entry name" value="EF_P"/>
    <property type="match status" value="1"/>
</dbReference>
<dbReference type="InterPro" id="IPR015365">
    <property type="entry name" value="Elong-fact-P_C"/>
</dbReference>
<dbReference type="InterPro" id="IPR012340">
    <property type="entry name" value="NA-bd_OB-fold"/>
</dbReference>
<dbReference type="InterPro" id="IPR014722">
    <property type="entry name" value="Rib_uL2_dom2"/>
</dbReference>
<dbReference type="InterPro" id="IPR020599">
    <property type="entry name" value="Transl_elong_fac_P/YeiP"/>
</dbReference>
<dbReference type="InterPro" id="IPR013185">
    <property type="entry name" value="Transl_elong_KOW-like"/>
</dbReference>
<dbReference type="InterPro" id="IPR001059">
    <property type="entry name" value="Transl_elong_P/YeiP_cen"/>
</dbReference>
<dbReference type="InterPro" id="IPR013852">
    <property type="entry name" value="Transl_elong_P/YeiP_CS"/>
</dbReference>
<dbReference type="InterPro" id="IPR011768">
    <property type="entry name" value="Transl_elongation_fac_P"/>
</dbReference>
<dbReference type="InterPro" id="IPR008991">
    <property type="entry name" value="Translation_prot_SH3-like_sf"/>
</dbReference>
<dbReference type="NCBIfam" id="TIGR00038">
    <property type="entry name" value="efp"/>
    <property type="match status" value="1"/>
</dbReference>
<dbReference type="NCBIfam" id="NF001810">
    <property type="entry name" value="PRK00529.1"/>
    <property type="match status" value="1"/>
</dbReference>
<dbReference type="PANTHER" id="PTHR30053">
    <property type="entry name" value="ELONGATION FACTOR P"/>
    <property type="match status" value="1"/>
</dbReference>
<dbReference type="PANTHER" id="PTHR30053:SF12">
    <property type="entry name" value="ELONGATION FACTOR P (EF-P) FAMILY PROTEIN"/>
    <property type="match status" value="1"/>
</dbReference>
<dbReference type="Pfam" id="PF01132">
    <property type="entry name" value="EFP"/>
    <property type="match status" value="1"/>
</dbReference>
<dbReference type="Pfam" id="PF08207">
    <property type="entry name" value="EFP_N"/>
    <property type="match status" value="1"/>
</dbReference>
<dbReference type="Pfam" id="PF09285">
    <property type="entry name" value="Elong-fact-P_C"/>
    <property type="match status" value="1"/>
</dbReference>
<dbReference type="PIRSF" id="PIRSF005901">
    <property type="entry name" value="EF-P"/>
    <property type="match status" value="1"/>
</dbReference>
<dbReference type="SMART" id="SM01185">
    <property type="entry name" value="EFP"/>
    <property type="match status" value="1"/>
</dbReference>
<dbReference type="SMART" id="SM00841">
    <property type="entry name" value="Elong-fact-P_C"/>
    <property type="match status" value="1"/>
</dbReference>
<dbReference type="SUPFAM" id="SSF50249">
    <property type="entry name" value="Nucleic acid-binding proteins"/>
    <property type="match status" value="2"/>
</dbReference>
<dbReference type="SUPFAM" id="SSF50104">
    <property type="entry name" value="Translation proteins SH3-like domain"/>
    <property type="match status" value="1"/>
</dbReference>
<dbReference type="PROSITE" id="PS01275">
    <property type="entry name" value="EFP"/>
    <property type="match status" value="1"/>
</dbReference>